<evidence type="ECO:0000255" key="1">
    <source>
        <dbReference type="HAMAP-Rule" id="MF_01328"/>
    </source>
</evidence>
<evidence type="ECO:0000256" key="2">
    <source>
        <dbReference type="SAM" id="MobiDB-lite"/>
    </source>
</evidence>
<evidence type="ECO:0000305" key="3"/>
<proteinExistence type="inferred from homology"/>
<feature type="chain" id="PRO_1000086530" description="Large ribosomal subunit protein uL4">
    <location>
        <begin position="1"/>
        <end position="206"/>
    </location>
</feature>
<feature type="region of interest" description="Disordered" evidence="2">
    <location>
        <begin position="43"/>
        <end position="94"/>
    </location>
</feature>
<feature type="compositionally biased region" description="Basic residues" evidence="2">
    <location>
        <begin position="58"/>
        <end position="70"/>
    </location>
</feature>
<keyword id="KW-1185">Reference proteome</keyword>
<keyword id="KW-0687">Ribonucleoprotein</keyword>
<keyword id="KW-0689">Ribosomal protein</keyword>
<keyword id="KW-0694">RNA-binding</keyword>
<keyword id="KW-0699">rRNA-binding</keyword>
<dbReference type="EMBL" id="CP000655">
    <property type="protein sequence ID" value="ABP33276.1"/>
    <property type="molecule type" value="Genomic_DNA"/>
</dbReference>
<dbReference type="RefSeq" id="WP_011901901.1">
    <property type="nucleotide sequence ID" value="NC_009379.1"/>
</dbReference>
<dbReference type="SMR" id="A4SUW2"/>
<dbReference type="GeneID" id="31480400"/>
<dbReference type="KEGG" id="pnu:Pnuc_0054"/>
<dbReference type="eggNOG" id="COG0088">
    <property type="taxonomic scope" value="Bacteria"/>
</dbReference>
<dbReference type="HOGENOM" id="CLU_041575_5_2_4"/>
<dbReference type="Proteomes" id="UP000000231">
    <property type="component" value="Chromosome"/>
</dbReference>
<dbReference type="GO" id="GO:1990904">
    <property type="term" value="C:ribonucleoprotein complex"/>
    <property type="evidence" value="ECO:0007669"/>
    <property type="project" value="UniProtKB-KW"/>
</dbReference>
<dbReference type="GO" id="GO:0005840">
    <property type="term" value="C:ribosome"/>
    <property type="evidence" value="ECO:0007669"/>
    <property type="project" value="UniProtKB-KW"/>
</dbReference>
<dbReference type="GO" id="GO:0019843">
    <property type="term" value="F:rRNA binding"/>
    <property type="evidence" value="ECO:0007669"/>
    <property type="project" value="UniProtKB-UniRule"/>
</dbReference>
<dbReference type="GO" id="GO:0003735">
    <property type="term" value="F:structural constituent of ribosome"/>
    <property type="evidence" value="ECO:0007669"/>
    <property type="project" value="InterPro"/>
</dbReference>
<dbReference type="GO" id="GO:0006412">
    <property type="term" value="P:translation"/>
    <property type="evidence" value="ECO:0007669"/>
    <property type="project" value="UniProtKB-UniRule"/>
</dbReference>
<dbReference type="Gene3D" id="3.40.1370.10">
    <property type="match status" value="1"/>
</dbReference>
<dbReference type="HAMAP" id="MF_01328_B">
    <property type="entry name" value="Ribosomal_uL4_B"/>
    <property type="match status" value="1"/>
</dbReference>
<dbReference type="InterPro" id="IPR002136">
    <property type="entry name" value="Ribosomal_uL4"/>
</dbReference>
<dbReference type="InterPro" id="IPR013005">
    <property type="entry name" value="Ribosomal_uL4-like"/>
</dbReference>
<dbReference type="InterPro" id="IPR023574">
    <property type="entry name" value="Ribosomal_uL4_dom_sf"/>
</dbReference>
<dbReference type="NCBIfam" id="TIGR03953">
    <property type="entry name" value="rplD_bact"/>
    <property type="match status" value="1"/>
</dbReference>
<dbReference type="PANTHER" id="PTHR10746">
    <property type="entry name" value="50S RIBOSOMAL PROTEIN L4"/>
    <property type="match status" value="1"/>
</dbReference>
<dbReference type="PANTHER" id="PTHR10746:SF6">
    <property type="entry name" value="LARGE RIBOSOMAL SUBUNIT PROTEIN UL4M"/>
    <property type="match status" value="1"/>
</dbReference>
<dbReference type="Pfam" id="PF00573">
    <property type="entry name" value="Ribosomal_L4"/>
    <property type="match status" value="1"/>
</dbReference>
<dbReference type="SUPFAM" id="SSF52166">
    <property type="entry name" value="Ribosomal protein L4"/>
    <property type="match status" value="1"/>
</dbReference>
<protein>
    <recommendedName>
        <fullName evidence="1">Large ribosomal subunit protein uL4</fullName>
    </recommendedName>
    <alternativeName>
        <fullName evidence="3">50S ribosomal protein L4</fullName>
    </alternativeName>
</protein>
<organism>
    <name type="scientific">Polynucleobacter asymbioticus (strain DSM 18221 / CIP 109841 / QLW-P1DMWA-1)</name>
    <name type="common">Polynucleobacter necessarius subsp. asymbioticus</name>
    <dbReference type="NCBI Taxonomy" id="312153"/>
    <lineage>
        <taxon>Bacteria</taxon>
        <taxon>Pseudomonadati</taxon>
        <taxon>Pseudomonadota</taxon>
        <taxon>Betaproteobacteria</taxon>
        <taxon>Burkholderiales</taxon>
        <taxon>Burkholderiaceae</taxon>
        <taxon>Polynucleobacter</taxon>
    </lineage>
</organism>
<gene>
    <name evidence="1" type="primary">rplD</name>
    <name type="ordered locus">Pnuc_0054</name>
</gene>
<accession>A4SUW2</accession>
<name>RL4_POLAQ</name>
<reference key="1">
    <citation type="journal article" date="2012" name="Stand. Genomic Sci.">
        <title>Complete genome sequence of Polynucleobacter necessarius subsp. asymbioticus type strain (QLW-P1DMWA-1(T)).</title>
        <authorList>
            <person name="Meincke L."/>
            <person name="Copeland A."/>
            <person name="Lapidus A."/>
            <person name="Lucas S."/>
            <person name="Berry K.W."/>
            <person name="Del Rio T.G."/>
            <person name="Hammon N."/>
            <person name="Dalin E."/>
            <person name="Tice H."/>
            <person name="Pitluck S."/>
            <person name="Richardson P."/>
            <person name="Bruce D."/>
            <person name="Goodwin L."/>
            <person name="Han C."/>
            <person name="Tapia R."/>
            <person name="Detter J.C."/>
            <person name="Schmutz J."/>
            <person name="Brettin T."/>
            <person name="Larimer F."/>
            <person name="Land M."/>
            <person name="Hauser L."/>
            <person name="Kyrpides N.C."/>
            <person name="Ivanova N."/>
            <person name="Goker M."/>
            <person name="Woyke T."/>
            <person name="Wu Q.L."/>
            <person name="Pockl M."/>
            <person name="Hahn M.W."/>
            <person name="Klenk H.P."/>
        </authorList>
    </citation>
    <scope>NUCLEOTIDE SEQUENCE [LARGE SCALE GENOMIC DNA]</scope>
    <source>
        <strain>DSM 18221 / CIP 109841 / QLW-P1DMWA-1</strain>
    </source>
</reference>
<comment type="function">
    <text evidence="1">One of the primary rRNA binding proteins, this protein initially binds near the 5'-end of the 23S rRNA. It is important during the early stages of 50S assembly. It makes multiple contacts with different domains of the 23S rRNA in the assembled 50S subunit and ribosome.</text>
</comment>
<comment type="function">
    <text evidence="1">Forms part of the polypeptide exit tunnel.</text>
</comment>
<comment type="subunit">
    <text evidence="1">Part of the 50S ribosomal subunit.</text>
</comment>
<comment type="similarity">
    <text evidence="1">Belongs to the universal ribosomal protein uL4 family.</text>
</comment>
<sequence>MELKLLQDNGTLGAGVQASPEVFEREYNEALVHQVVVAYQANARSGNRAQKDREQVKHTTKKPWRQKGTGRARAGMSSSPLWRGGGRIFPNSPEENFSQKVNKKMYRAGMRSILSQLAREGRLNVVDQFSLDAPKTKVLADKVKAMGLDSVLIIVDQVSENLYLASRNLHKVAVCEPQHADPLALVQYKKVLVSKAAIAKIEELLK</sequence>